<protein>
    <recommendedName>
        <fullName evidence="1">Histidine ammonia-lyase</fullName>
        <shortName evidence="1">Histidase</shortName>
        <ecNumber evidence="1">4.3.1.3</ecNumber>
    </recommendedName>
</protein>
<organism>
    <name type="scientific">Anaeromyxobacter sp. (strain K)</name>
    <dbReference type="NCBI Taxonomy" id="447217"/>
    <lineage>
        <taxon>Bacteria</taxon>
        <taxon>Pseudomonadati</taxon>
        <taxon>Myxococcota</taxon>
        <taxon>Myxococcia</taxon>
        <taxon>Myxococcales</taxon>
        <taxon>Cystobacterineae</taxon>
        <taxon>Anaeromyxobacteraceae</taxon>
        <taxon>Anaeromyxobacter</taxon>
    </lineage>
</organism>
<keyword id="KW-0963">Cytoplasm</keyword>
<keyword id="KW-0369">Histidine metabolism</keyword>
<keyword id="KW-0456">Lyase</keyword>
<gene>
    <name evidence="1" type="primary">hutH</name>
    <name type="ordered locus">AnaeK_2046</name>
</gene>
<comment type="catalytic activity">
    <reaction evidence="1">
        <text>L-histidine = trans-urocanate + NH4(+)</text>
        <dbReference type="Rhea" id="RHEA:21232"/>
        <dbReference type="ChEBI" id="CHEBI:17771"/>
        <dbReference type="ChEBI" id="CHEBI:28938"/>
        <dbReference type="ChEBI" id="CHEBI:57595"/>
        <dbReference type="EC" id="4.3.1.3"/>
    </reaction>
</comment>
<comment type="pathway">
    <text evidence="1">Amino-acid degradation; L-histidine degradation into L-glutamate; N-formimidoyl-L-glutamate from L-histidine: step 1/3.</text>
</comment>
<comment type="subcellular location">
    <subcellularLocation>
        <location evidence="1">Cytoplasm</location>
    </subcellularLocation>
</comment>
<comment type="PTM">
    <text evidence="1">Contains an active site 4-methylidene-imidazol-5-one (MIO), which is formed autocatalytically by cyclization and dehydration of residues Ala-Ser-Gly.</text>
</comment>
<comment type="similarity">
    <text evidence="1">Belongs to the PAL/histidase family.</text>
</comment>
<dbReference type="EC" id="4.3.1.3" evidence="1"/>
<dbReference type="EMBL" id="CP001131">
    <property type="protein sequence ID" value="ACG73274.1"/>
    <property type="molecule type" value="Genomic_DNA"/>
</dbReference>
<dbReference type="RefSeq" id="WP_012526075.1">
    <property type="nucleotide sequence ID" value="NC_011145.1"/>
</dbReference>
<dbReference type="SMR" id="B4UC43"/>
<dbReference type="KEGG" id="ank:AnaeK_2046"/>
<dbReference type="HOGENOM" id="CLU_014801_4_0_7"/>
<dbReference type="OrthoDB" id="9806955at2"/>
<dbReference type="UniPathway" id="UPA00379">
    <property type="reaction ID" value="UER00549"/>
</dbReference>
<dbReference type="Proteomes" id="UP000001871">
    <property type="component" value="Chromosome"/>
</dbReference>
<dbReference type="GO" id="GO:0005737">
    <property type="term" value="C:cytoplasm"/>
    <property type="evidence" value="ECO:0007669"/>
    <property type="project" value="UniProtKB-SubCell"/>
</dbReference>
<dbReference type="GO" id="GO:0004397">
    <property type="term" value="F:histidine ammonia-lyase activity"/>
    <property type="evidence" value="ECO:0007669"/>
    <property type="project" value="UniProtKB-UniRule"/>
</dbReference>
<dbReference type="GO" id="GO:0019556">
    <property type="term" value="P:L-histidine catabolic process to glutamate and formamide"/>
    <property type="evidence" value="ECO:0007669"/>
    <property type="project" value="UniProtKB-UniPathway"/>
</dbReference>
<dbReference type="GO" id="GO:0019557">
    <property type="term" value="P:L-histidine catabolic process to glutamate and formate"/>
    <property type="evidence" value="ECO:0007669"/>
    <property type="project" value="UniProtKB-UniPathway"/>
</dbReference>
<dbReference type="CDD" id="cd00332">
    <property type="entry name" value="PAL-HAL"/>
    <property type="match status" value="1"/>
</dbReference>
<dbReference type="FunFam" id="1.10.275.10:FF:000005">
    <property type="entry name" value="Histidine ammonia-lyase"/>
    <property type="match status" value="1"/>
</dbReference>
<dbReference type="FunFam" id="1.20.200.10:FF:000003">
    <property type="entry name" value="Histidine ammonia-lyase"/>
    <property type="match status" value="1"/>
</dbReference>
<dbReference type="Gene3D" id="1.20.200.10">
    <property type="entry name" value="Fumarase/aspartase (Central domain)"/>
    <property type="match status" value="1"/>
</dbReference>
<dbReference type="Gene3D" id="1.10.275.10">
    <property type="entry name" value="Fumarase/aspartase (N-terminal domain)"/>
    <property type="match status" value="1"/>
</dbReference>
<dbReference type="HAMAP" id="MF_00229">
    <property type="entry name" value="His_ammonia_lyase"/>
    <property type="match status" value="1"/>
</dbReference>
<dbReference type="InterPro" id="IPR001106">
    <property type="entry name" value="Aromatic_Lyase"/>
</dbReference>
<dbReference type="InterPro" id="IPR024083">
    <property type="entry name" value="Fumarase/histidase_N"/>
</dbReference>
<dbReference type="InterPro" id="IPR005921">
    <property type="entry name" value="HutH"/>
</dbReference>
<dbReference type="InterPro" id="IPR008948">
    <property type="entry name" value="L-Aspartase-like"/>
</dbReference>
<dbReference type="InterPro" id="IPR022313">
    <property type="entry name" value="Phe/His_NH3-lyase_AS"/>
</dbReference>
<dbReference type="NCBIfam" id="TIGR01225">
    <property type="entry name" value="hutH"/>
    <property type="match status" value="1"/>
</dbReference>
<dbReference type="NCBIfam" id="NF006871">
    <property type="entry name" value="PRK09367.1"/>
    <property type="match status" value="1"/>
</dbReference>
<dbReference type="PANTHER" id="PTHR10362">
    <property type="entry name" value="HISTIDINE AMMONIA-LYASE"/>
    <property type="match status" value="1"/>
</dbReference>
<dbReference type="Pfam" id="PF00221">
    <property type="entry name" value="Lyase_aromatic"/>
    <property type="match status" value="1"/>
</dbReference>
<dbReference type="SUPFAM" id="SSF48557">
    <property type="entry name" value="L-aspartase-like"/>
    <property type="match status" value="1"/>
</dbReference>
<dbReference type="PROSITE" id="PS00488">
    <property type="entry name" value="PAL_HISTIDASE"/>
    <property type="match status" value="1"/>
</dbReference>
<sequence>METLLLDGETLTLEQVRAVATGAARAALAPAARERVRRSRALVDARLEDGEAHYGINTGFGTLAEVRIPRADLERLQRNLVLSHAAGVGAPLPLPEARALVLLRANVLAKGVSGIRERTLDLLLAMLERGVVPVVPERGSVGASGDLAPLAHLALVLIGDGEAFLAPPGAAGRPERLPGGEALRRAGLEPVVLQPKEGLALVNGTQAMAAVGTLALLRAERLAALADLAGAMTLEGLLGSHRPFAPEIQAARGQPGQIAAAAHLRALLAGSELNASHQGPGCHKVQDPYSLRCMPQVHGAARDGIGFCRGVLAREVNAATDNPLVFPDTGEIVSGGNFHGQPVALALDVLAVAASHLAAISERRVEQLVNPSLSGLPPFLAPQHGLNSGFMIAQVTSAALVSENKVLCHPASVDSIPSSAGREDHVSMGMTAALKARQVVENVRTCLAIELLVAAQALDLRAPLRPAQRVAEAHARLRERVPHLSEDRALHRDIEAVSSLVDEGGLEL</sequence>
<feature type="chain" id="PRO_1000100432" description="Histidine ammonia-lyase">
    <location>
        <begin position="1"/>
        <end position="508"/>
    </location>
</feature>
<feature type="modified residue" description="2,3-didehydroalanine (Ser)" evidence="1">
    <location>
        <position position="144"/>
    </location>
</feature>
<feature type="cross-link" description="5-imidazolinone (Ala-Gly)" evidence="1">
    <location>
        <begin position="143"/>
        <end position="145"/>
    </location>
</feature>
<name>HUTH_ANASK</name>
<reference key="1">
    <citation type="submission" date="2008-08" db="EMBL/GenBank/DDBJ databases">
        <title>Complete sequence of Anaeromyxobacter sp. K.</title>
        <authorList>
            <consortium name="US DOE Joint Genome Institute"/>
            <person name="Lucas S."/>
            <person name="Copeland A."/>
            <person name="Lapidus A."/>
            <person name="Glavina del Rio T."/>
            <person name="Dalin E."/>
            <person name="Tice H."/>
            <person name="Bruce D."/>
            <person name="Goodwin L."/>
            <person name="Pitluck S."/>
            <person name="Saunders E."/>
            <person name="Brettin T."/>
            <person name="Detter J.C."/>
            <person name="Han C."/>
            <person name="Larimer F."/>
            <person name="Land M."/>
            <person name="Hauser L."/>
            <person name="Kyrpides N."/>
            <person name="Ovchinnikiva G."/>
            <person name="Beliaev A."/>
        </authorList>
    </citation>
    <scope>NUCLEOTIDE SEQUENCE [LARGE SCALE GENOMIC DNA]</scope>
    <source>
        <strain>K</strain>
    </source>
</reference>
<proteinExistence type="inferred from homology"/>
<evidence type="ECO:0000255" key="1">
    <source>
        <dbReference type="HAMAP-Rule" id="MF_00229"/>
    </source>
</evidence>
<accession>B4UC43</accession>